<protein>
    <recommendedName>
        <fullName evidence="1">Ion-translocating oxidoreductase complex subunit A</fullName>
        <ecNumber evidence="1">7.-.-.-</ecNumber>
    </recommendedName>
    <alternativeName>
        <fullName evidence="1">Rnf electron transport complex subunit A</fullName>
    </alternativeName>
</protein>
<proteinExistence type="inferred from homology"/>
<feature type="chain" id="PRO_1000013567" description="Ion-translocating oxidoreductase complex subunit A">
    <location>
        <begin position="1"/>
        <end position="193"/>
    </location>
</feature>
<feature type="transmembrane region" description="Helical" evidence="1">
    <location>
        <begin position="5"/>
        <end position="25"/>
    </location>
</feature>
<feature type="transmembrane region" description="Helical" evidence="1">
    <location>
        <begin position="39"/>
        <end position="59"/>
    </location>
</feature>
<feature type="transmembrane region" description="Helical" evidence="1">
    <location>
        <begin position="62"/>
        <end position="82"/>
    </location>
</feature>
<feature type="transmembrane region" description="Helical" evidence="1">
    <location>
        <begin position="102"/>
        <end position="122"/>
    </location>
</feature>
<feature type="transmembrane region" description="Helical" evidence="1">
    <location>
        <begin position="134"/>
        <end position="154"/>
    </location>
</feature>
<feature type="transmembrane region" description="Helical" evidence="1">
    <location>
        <begin position="171"/>
        <end position="191"/>
    </location>
</feature>
<name>RNFA_YERPP</name>
<reference key="1">
    <citation type="submission" date="2007-02" db="EMBL/GenBank/DDBJ databases">
        <title>Complete sequence of chromosome of Yersinia pestis Pestoides F.</title>
        <authorList>
            <consortium name="US DOE Joint Genome Institute"/>
            <person name="Copeland A."/>
            <person name="Lucas S."/>
            <person name="Lapidus A."/>
            <person name="Barry K."/>
            <person name="Detter J.C."/>
            <person name="Glavina del Rio T."/>
            <person name="Hammon N."/>
            <person name="Israni S."/>
            <person name="Dalin E."/>
            <person name="Tice H."/>
            <person name="Pitluck S."/>
            <person name="Di Bartolo G."/>
            <person name="Chain P."/>
            <person name="Malfatti S."/>
            <person name="Shin M."/>
            <person name="Vergez L."/>
            <person name="Schmutz J."/>
            <person name="Larimer F."/>
            <person name="Land M."/>
            <person name="Hauser L."/>
            <person name="Worsham P."/>
            <person name="Chu M."/>
            <person name="Bearden S."/>
            <person name="Garcia E."/>
            <person name="Richardson P."/>
        </authorList>
    </citation>
    <scope>NUCLEOTIDE SEQUENCE [LARGE SCALE GENOMIC DNA]</scope>
    <source>
        <strain>Pestoides F</strain>
    </source>
</reference>
<comment type="function">
    <text evidence="1">Part of a membrane-bound complex that couples electron transfer with translocation of ions across the membrane.</text>
</comment>
<comment type="subunit">
    <text evidence="1">The complex is composed of six subunits: RnfA, RnfB, RnfC, RnfD, RnfE and RnfG.</text>
</comment>
<comment type="subcellular location">
    <subcellularLocation>
        <location evidence="1">Cell inner membrane</location>
        <topology evidence="1">Multi-pass membrane protein</topology>
    </subcellularLocation>
</comment>
<comment type="similarity">
    <text evidence="1">Belongs to the NqrDE/RnfAE family.</text>
</comment>
<accession>A4TJ27</accession>
<gene>
    <name evidence="1" type="primary">rnfA</name>
    <name type="ordered locus">YPDSF_0889</name>
</gene>
<organism>
    <name type="scientific">Yersinia pestis (strain Pestoides F)</name>
    <dbReference type="NCBI Taxonomy" id="386656"/>
    <lineage>
        <taxon>Bacteria</taxon>
        <taxon>Pseudomonadati</taxon>
        <taxon>Pseudomonadota</taxon>
        <taxon>Gammaproteobacteria</taxon>
        <taxon>Enterobacterales</taxon>
        <taxon>Yersiniaceae</taxon>
        <taxon>Yersinia</taxon>
    </lineage>
</organism>
<evidence type="ECO:0000255" key="1">
    <source>
        <dbReference type="HAMAP-Rule" id="MF_00459"/>
    </source>
</evidence>
<dbReference type="EC" id="7.-.-.-" evidence="1"/>
<dbReference type="EMBL" id="CP000668">
    <property type="protein sequence ID" value="ABP39289.1"/>
    <property type="molecule type" value="Genomic_DNA"/>
</dbReference>
<dbReference type="SMR" id="A4TJ27"/>
<dbReference type="KEGG" id="ypp:YPDSF_0889"/>
<dbReference type="PATRIC" id="fig|386656.14.peg.2964"/>
<dbReference type="GO" id="GO:0005886">
    <property type="term" value="C:plasma membrane"/>
    <property type="evidence" value="ECO:0007669"/>
    <property type="project" value="UniProtKB-SubCell"/>
</dbReference>
<dbReference type="GO" id="GO:0022900">
    <property type="term" value="P:electron transport chain"/>
    <property type="evidence" value="ECO:0007669"/>
    <property type="project" value="UniProtKB-UniRule"/>
</dbReference>
<dbReference type="HAMAP" id="MF_00459">
    <property type="entry name" value="RsxA_RnfA"/>
    <property type="match status" value="1"/>
</dbReference>
<dbReference type="InterPro" id="IPR011293">
    <property type="entry name" value="Ion_transpt_RnfA/RsxA"/>
</dbReference>
<dbReference type="InterPro" id="IPR003667">
    <property type="entry name" value="NqrDE/RnfAE"/>
</dbReference>
<dbReference type="InterPro" id="IPR050133">
    <property type="entry name" value="NqrDE/RnfAE_oxidrdctase"/>
</dbReference>
<dbReference type="NCBIfam" id="NF003481">
    <property type="entry name" value="PRK05151.1"/>
    <property type="match status" value="1"/>
</dbReference>
<dbReference type="NCBIfam" id="TIGR01943">
    <property type="entry name" value="rnfA"/>
    <property type="match status" value="1"/>
</dbReference>
<dbReference type="PANTHER" id="PTHR30335">
    <property type="entry name" value="INTEGRAL MEMBRANE PROTEIN OF SOXR-REDUCING COMPLEX"/>
    <property type="match status" value="1"/>
</dbReference>
<dbReference type="PANTHER" id="PTHR30335:SF0">
    <property type="entry name" value="ION-TRANSLOCATING OXIDOREDUCTASE COMPLEX SUBUNIT A"/>
    <property type="match status" value="1"/>
</dbReference>
<dbReference type="Pfam" id="PF02508">
    <property type="entry name" value="Rnf-Nqr"/>
    <property type="match status" value="1"/>
</dbReference>
<dbReference type="PIRSF" id="PIRSF006102">
    <property type="entry name" value="NQR_DE"/>
    <property type="match status" value="1"/>
</dbReference>
<keyword id="KW-0997">Cell inner membrane</keyword>
<keyword id="KW-1003">Cell membrane</keyword>
<keyword id="KW-0249">Electron transport</keyword>
<keyword id="KW-0472">Membrane</keyword>
<keyword id="KW-1278">Translocase</keyword>
<keyword id="KW-0812">Transmembrane</keyword>
<keyword id="KW-1133">Transmembrane helix</keyword>
<keyword id="KW-0813">Transport</keyword>
<sequence length="193" mass="20881">MTEYLLLFVGTVLVNNFVLVKFLGLCPFMGVSKKLETAIGMGLATTFVLTLASVCAWMVNSFILLPLGLIYLRTLAFILVIAVVVQFTELVVRKTSPTLYRLLGIFLPLITTNCAVLGVALLNVNQSHNFMQSAVYGFSAAAGFSLVMVLFAAIRERLAVADVPAPFRRSSIALITAGLMSLAFMGFTGLVKF</sequence>